<reference key="1">
    <citation type="journal article" date="2009" name="J. Bacteriol.">
        <title>Genome sequences of three Agrobacterium biovars help elucidate the evolution of multichromosome genomes in bacteria.</title>
        <authorList>
            <person name="Slater S.C."/>
            <person name="Goldman B.S."/>
            <person name="Goodner B."/>
            <person name="Setubal J.C."/>
            <person name="Farrand S.K."/>
            <person name="Nester E.W."/>
            <person name="Burr T.J."/>
            <person name="Banta L."/>
            <person name="Dickerman A.W."/>
            <person name="Paulsen I."/>
            <person name="Otten L."/>
            <person name="Suen G."/>
            <person name="Welch R."/>
            <person name="Almeida N.F."/>
            <person name="Arnold F."/>
            <person name="Burton O.T."/>
            <person name="Du Z."/>
            <person name="Ewing A."/>
            <person name="Godsy E."/>
            <person name="Heisel S."/>
            <person name="Houmiel K.L."/>
            <person name="Jhaveri J."/>
            <person name="Lu J."/>
            <person name="Miller N.M."/>
            <person name="Norton S."/>
            <person name="Chen Q."/>
            <person name="Phoolcharoen W."/>
            <person name="Ohlin V."/>
            <person name="Ondrusek D."/>
            <person name="Pride N."/>
            <person name="Stricklin S.L."/>
            <person name="Sun J."/>
            <person name="Wheeler C."/>
            <person name="Wilson L."/>
            <person name="Zhu H."/>
            <person name="Wood D.W."/>
        </authorList>
    </citation>
    <scope>NUCLEOTIDE SEQUENCE [LARGE SCALE GENOMIC DNA]</scope>
    <source>
        <strain>K84 / ATCC BAA-868</strain>
    </source>
</reference>
<feature type="chain" id="PRO_1000198866" description="Arginine--tRNA ligase">
    <location>
        <begin position="1"/>
        <end position="586"/>
    </location>
</feature>
<feature type="short sequence motif" description="'HIGH' region">
    <location>
        <begin position="131"/>
        <end position="141"/>
    </location>
</feature>
<keyword id="KW-0030">Aminoacyl-tRNA synthetase</keyword>
<keyword id="KW-0067">ATP-binding</keyword>
<keyword id="KW-0963">Cytoplasm</keyword>
<keyword id="KW-0436">Ligase</keyword>
<keyword id="KW-0547">Nucleotide-binding</keyword>
<keyword id="KW-0648">Protein biosynthesis</keyword>
<sequence length="586" mass="64843">MNLFTDFEVRIKNALEQIDIVREKRSELDFGRIGVEPPRDASHGDVATNAAMVLSKPLGMNPRALAEIIIAKLQEDADVADVSAAGPGFINIRLSVGYWQRLLATMISEGEKFGRSTVGAGQKVNVEYVSANPTGPMHVGHCRGAVVGDALANLLGFAGYDVTKEYYINDAGSQIDVLARSVFIRYREALGEQVGEIPAGLYPGDYLVPVGESLAKEFGTKLRGMPEEQWLPIIRERAIDAMMVMIRADLEALNVHHDVFFSERTLHANGAALIRTAINDLTFKGYVYKGALPPPKGQLPEDWEDREQTLFRSTEVGDDIDRPLIKSDGSYTYFAADVAYFKNKFDRGFNEMIYILGADHGGYVKRLEAVARGVSEGKAKLTVLLCQLVKLFRNGEPVKMSKRSGDFVTLREVVDEVGRDSVRFMMLYRKSSEPLDFDFAKVTEQSKDNPVFYVQYAHARCMSIFRQAQEAFPDLDIASLDLAKAVGGVISDPAELQLVAKIAEFPRIIEAAAQAQEPHRIAFYLYDLASSFHGHWNKGKDLPELRFVNDKNRELSIARLGLVHAVASVLKSGLGITGTAAPDEMR</sequence>
<dbReference type="EC" id="6.1.1.19" evidence="1"/>
<dbReference type="EMBL" id="CP000628">
    <property type="protein sequence ID" value="ACM26384.1"/>
    <property type="molecule type" value="Genomic_DNA"/>
</dbReference>
<dbReference type="RefSeq" id="WP_012651306.1">
    <property type="nucleotide sequence ID" value="NC_011985.1"/>
</dbReference>
<dbReference type="SMR" id="B9JEG3"/>
<dbReference type="STRING" id="311403.Arad_2119"/>
<dbReference type="GeneID" id="86848279"/>
<dbReference type="KEGG" id="ara:Arad_2119"/>
<dbReference type="eggNOG" id="COG0018">
    <property type="taxonomic scope" value="Bacteria"/>
</dbReference>
<dbReference type="HOGENOM" id="CLU_006406_0_1_5"/>
<dbReference type="Proteomes" id="UP000001600">
    <property type="component" value="Chromosome 1"/>
</dbReference>
<dbReference type="GO" id="GO:0005737">
    <property type="term" value="C:cytoplasm"/>
    <property type="evidence" value="ECO:0007669"/>
    <property type="project" value="UniProtKB-SubCell"/>
</dbReference>
<dbReference type="GO" id="GO:0004814">
    <property type="term" value="F:arginine-tRNA ligase activity"/>
    <property type="evidence" value="ECO:0007669"/>
    <property type="project" value="UniProtKB-UniRule"/>
</dbReference>
<dbReference type="GO" id="GO:0005524">
    <property type="term" value="F:ATP binding"/>
    <property type="evidence" value="ECO:0007669"/>
    <property type="project" value="UniProtKB-UniRule"/>
</dbReference>
<dbReference type="GO" id="GO:0006420">
    <property type="term" value="P:arginyl-tRNA aminoacylation"/>
    <property type="evidence" value="ECO:0007669"/>
    <property type="project" value="UniProtKB-UniRule"/>
</dbReference>
<dbReference type="CDD" id="cd00671">
    <property type="entry name" value="ArgRS_core"/>
    <property type="match status" value="1"/>
</dbReference>
<dbReference type="FunFam" id="1.10.730.10:FF:000008">
    <property type="entry name" value="Arginine--tRNA ligase"/>
    <property type="match status" value="1"/>
</dbReference>
<dbReference type="Gene3D" id="3.30.1360.70">
    <property type="entry name" value="Arginyl tRNA synthetase N-terminal domain"/>
    <property type="match status" value="1"/>
</dbReference>
<dbReference type="Gene3D" id="3.40.50.620">
    <property type="entry name" value="HUPs"/>
    <property type="match status" value="1"/>
</dbReference>
<dbReference type="Gene3D" id="1.10.730.10">
    <property type="entry name" value="Isoleucyl-tRNA Synthetase, Domain 1"/>
    <property type="match status" value="1"/>
</dbReference>
<dbReference type="HAMAP" id="MF_00123">
    <property type="entry name" value="Arg_tRNA_synth"/>
    <property type="match status" value="1"/>
</dbReference>
<dbReference type="InterPro" id="IPR001412">
    <property type="entry name" value="aa-tRNA-synth_I_CS"/>
</dbReference>
<dbReference type="InterPro" id="IPR001278">
    <property type="entry name" value="Arg-tRNA-ligase"/>
</dbReference>
<dbReference type="InterPro" id="IPR005148">
    <property type="entry name" value="Arg-tRNA-synth_N"/>
</dbReference>
<dbReference type="InterPro" id="IPR036695">
    <property type="entry name" value="Arg-tRNA-synth_N_sf"/>
</dbReference>
<dbReference type="InterPro" id="IPR035684">
    <property type="entry name" value="ArgRS_core"/>
</dbReference>
<dbReference type="InterPro" id="IPR008909">
    <property type="entry name" value="DALR_anticod-bd"/>
</dbReference>
<dbReference type="InterPro" id="IPR014729">
    <property type="entry name" value="Rossmann-like_a/b/a_fold"/>
</dbReference>
<dbReference type="InterPro" id="IPR009080">
    <property type="entry name" value="tRNAsynth_Ia_anticodon-bd"/>
</dbReference>
<dbReference type="NCBIfam" id="TIGR00456">
    <property type="entry name" value="argS"/>
    <property type="match status" value="1"/>
</dbReference>
<dbReference type="PANTHER" id="PTHR11956:SF5">
    <property type="entry name" value="ARGININE--TRNA LIGASE, CYTOPLASMIC"/>
    <property type="match status" value="1"/>
</dbReference>
<dbReference type="PANTHER" id="PTHR11956">
    <property type="entry name" value="ARGINYL-TRNA SYNTHETASE"/>
    <property type="match status" value="1"/>
</dbReference>
<dbReference type="Pfam" id="PF03485">
    <property type="entry name" value="Arg_tRNA_synt_N"/>
    <property type="match status" value="1"/>
</dbReference>
<dbReference type="Pfam" id="PF05746">
    <property type="entry name" value="DALR_1"/>
    <property type="match status" value="1"/>
</dbReference>
<dbReference type="Pfam" id="PF00750">
    <property type="entry name" value="tRNA-synt_1d"/>
    <property type="match status" value="2"/>
</dbReference>
<dbReference type="PRINTS" id="PR01038">
    <property type="entry name" value="TRNASYNTHARG"/>
</dbReference>
<dbReference type="SMART" id="SM01016">
    <property type="entry name" value="Arg_tRNA_synt_N"/>
    <property type="match status" value="1"/>
</dbReference>
<dbReference type="SMART" id="SM00836">
    <property type="entry name" value="DALR_1"/>
    <property type="match status" value="1"/>
</dbReference>
<dbReference type="SUPFAM" id="SSF47323">
    <property type="entry name" value="Anticodon-binding domain of a subclass of class I aminoacyl-tRNA synthetases"/>
    <property type="match status" value="1"/>
</dbReference>
<dbReference type="SUPFAM" id="SSF55190">
    <property type="entry name" value="Arginyl-tRNA synthetase (ArgRS), N-terminal 'additional' domain"/>
    <property type="match status" value="1"/>
</dbReference>
<dbReference type="SUPFAM" id="SSF52374">
    <property type="entry name" value="Nucleotidylyl transferase"/>
    <property type="match status" value="1"/>
</dbReference>
<dbReference type="PROSITE" id="PS00178">
    <property type="entry name" value="AA_TRNA_LIGASE_I"/>
    <property type="match status" value="1"/>
</dbReference>
<comment type="catalytic activity">
    <reaction evidence="1">
        <text>tRNA(Arg) + L-arginine + ATP = L-arginyl-tRNA(Arg) + AMP + diphosphate</text>
        <dbReference type="Rhea" id="RHEA:20301"/>
        <dbReference type="Rhea" id="RHEA-COMP:9658"/>
        <dbReference type="Rhea" id="RHEA-COMP:9673"/>
        <dbReference type="ChEBI" id="CHEBI:30616"/>
        <dbReference type="ChEBI" id="CHEBI:32682"/>
        <dbReference type="ChEBI" id="CHEBI:33019"/>
        <dbReference type="ChEBI" id="CHEBI:78442"/>
        <dbReference type="ChEBI" id="CHEBI:78513"/>
        <dbReference type="ChEBI" id="CHEBI:456215"/>
        <dbReference type="EC" id="6.1.1.19"/>
    </reaction>
</comment>
<comment type="subunit">
    <text evidence="1">Monomer.</text>
</comment>
<comment type="subcellular location">
    <subcellularLocation>
        <location evidence="1">Cytoplasm</location>
    </subcellularLocation>
</comment>
<comment type="similarity">
    <text evidence="1">Belongs to the class-I aminoacyl-tRNA synthetase family.</text>
</comment>
<proteinExistence type="inferred from homology"/>
<organism>
    <name type="scientific">Rhizobium rhizogenes (strain K84 / ATCC BAA-868)</name>
    <name type="common">Agrobacterium radiobacter</name>
    <dbReference type="NCBI Taxonomy" id="311403"/>
    <lineage>
        <taxon>Bacteria</taxon>
        <taxon>Pseudomonadati</taxon>
        <taxon>Pseudomonadota</taxon>
        <taxon>Alphaproteobacteria</taxon>
        <taxon>Hyphomicrobiales</taxon>
        <taxon>Rhizobiaceae</taxon>
        <taxon>Rhizobium/Agrobacterium group</taxon>
        <taxon>Rhizobium</taxon>
    </lineage>
</organism>
<protein>
    <recommendedName>
        <fullName evidence="1">Arginine--tRNA ligase</fullName>
        <ecNumber evidence="1">6.1.1.19</ecNumber>
    </recommendedName>
    <alternativeName>
        <fullName evidence="1">Arginyl-tRNA synthetase</fullName>
        <shortName evidence="1">ArgRS</shortName>
    </alternativeName>
</protein>
<evidence type="ECO:0000255" key="1">
    <source>
        <dbReference type="HAMAP-Rule" id="MF_00123"/>
    </source>
</evidence>
<gene>
    <name evidence="1" type="primary">argS</name>
    <name type="ordered locus">Arad_2119</name>
</gene>
<name>SYR_RHIR8</name>
<accession>B9JEG3</accession>